<evidence type="ECO:0000250" key="1"/>
<evidence type="ECO:0000250" key="2">
    <source>
        <dbReference type="UniProtKB" id="P60022"/>
    </source>
</evidence>
<evidence type="ECO:0000269" key="3">
    <source>
    </source>
</evidence>
<evidence type="ECO:0000305" key="4"/>
<name>DEFB1_BOVIN</name>
<sequence>DFASCHTNGGICLPNRCPGHMIQIGICFRPRVKCCRSW</sequence>
<dbReference type="PIR" id="A45495">
    <property type="entry name" value="A45495"/>
</dbReference>
<dbReference type="SMR" id="P46159"/>
<dbReference type="FunCoup" id="P46159">
    <property type="interactions" value="22"/>
</dbReference>
<dbReference type="STRING" id="9913.ENSBTAP00000057042"/>
<dbReference type="PaxDb" id="9913-ENSBTAP00000049375"/>
<dbReference type="HOGENOM" id="CLU_189296_4_1_1"/>
<dbReference type="InParanoid" id="P46159"/>
<dbReference type="Proteomes" id="UP000009136">
    <property type="component" value="Unplaced"/>
</dbReference>
<dbReference type="GO" id="GO:0005615">
    <property type="term" value="C:extracellular space"/>
    <property type="evidence" value="ECO:0000318"/>
    <property type="project" value="GO_Central"/>
</dbReference>
<dbReference type="GO" id="GO:0016020">
    <property type="term" value="C:membrane"/>
    <property type="evidence" value="ECO:0000250"/>
    <property type="project" value="UniProtKB"/>
</dbReference>
<dbReference type="GO" id="GO:1990742">
    <property type="term" value="C:microvesicle"/>
    <property type="evidence" value="ECO:0000250"/>
    <property type="project" value="UniProtKB"/>
</dbReference>
<dbReference type="GO" id="GO:0097225">
    <property type="term" value="C:sperm midpiece"/>
    <property type="evidence" value="ECO:0000250"/>
    <property type="project" value="UniProtKB"/>
</dbReference>
<dbReference type="GO" id="GO:0031731">
    <property type="term" value="F:CCR6 chemokine receptor binding"/>
    <property type="evidence" value="ECO:0000250"/>
    <property type="project" value="UniProtKB"/>
</dbReference>
<dbReference type="GO" id="GO:0042056">
    <property type="term" value="F:chemoattractant activity"/>
    <property type="evidence" value="ECO:0000318"/>
    <property type="project" value="GO_Central"/>
</dbReference>
<dbReference type="GO" id="GO:0042802">
    <property type="term" value="F:identical protein binding"/>
    <property type="evidence" value="ECO:0000250"/>
    <property type="project" value="UniProtKB"/>
</dbReference>
<dbReference type="GO" id="GO:0019722">
    <property type="term" value="P:calcium-mediated signaling"/>
    <property type="evidence" value="ECO:0000250"/>
    <property type="project" value="UniProtKB"/>
</dbReference>
<dbReference type="GO" id="GO:0060326">
    <property type="term" value="P:cell chemotaxis"/>
    <property type="evidence" value="ECO:0000318"/>
    <property type="project" value="GO_Central"/>
</dbReference>
<dbReference type="GO" id="GO:0042742">
    <property type="term" value="P:defense response to bacterium"/>
    <property type="evidence" value="ECO:0000318"/>
    <property type="project" value="GO_Central"/>
</dbReference>
<dbReference type="GO" id="GO:0050829">
    <property type="term" value="P:defense response to Gram-negative bacterium"/>
    <property type="evidence" value="ECO:0000250"/>
    <property type="project" value="UniProtKB"/>
</dbReference>
<dbReference type="GO" id="GO:0050830">
    <property type="term" value="P:defense response to Gram-positive bacterium"/>
    <property type="evidence" value="ECO:0000250"/>
    <property type="project" value="UniProtKB"/>
</dbReference>
<dbReference type="GO" id="GO:0060474">
    <property type="term" value="P:positive regulation of flagellated sperm motility involved in capacitation"/>
    <property type="evidence" value="ECO:0000250"/>
    <property type="project" value="UniProtKB"/>
</dbReference>
<dbReference type="FunFam" id="3.10.360.10:FF:000001">
    <property type="entry name" value="Beta-defensin 1"/>
    <property type="match status" value="1"/>
</dbReference>
<dbReference type="Gene3D" id="3.10.360.10">
    <property type="entry name" value="Antimicrobial Peptide, Beta-defensin 2, Chain A"/>
    <property type="match status" value="1"/>
</dbReference>
<dbReference type="InterPro" id="IPR006080">
    <property type="entry name" value="Beta/alpha-defensin_C"/>
</dbReference>
<dbReference type="InterPro" id="IPR001855">
    <property type="entry name" value="Defensin_beta-like"/>
</dbReference>
<dbReference type="PANTHER" id="PTHR20515">
    <property type="entry name" value="BETA-DEFENSIN"/>
    <property type="match status" value="1"/>
</dbReference>
<dbReference type="PANTHER" id="PTHR20515:SF2">
    <property type="entry name" value="DEFENSIN BETA 4A"/>
    <property type="match status" value="1"/>
</dbReference>
<dbReference type="Pfam" id="PF00711">
    <property type="entry name" value="Defensin_beta"/>
    <property type="match status" value="1"/>
</dbReference>
<dbReference type="SMART" id="SM00048">
    <property type="entry name" value="DEFSN"/>
    <property type="match status" value="1"/>
</dbReference>
<dbReference type="SUPFAM" id="SSF57392">
    <property type="entry name" value="Defensin-like"/>
    <property type="match status" value="1"/>
</dbReference>
<comment type="function">
    <text evidence="2 3">Has bactericidal activity. Active against E.coli ML35 but not against S.aureus 502A (PubMed:8454635). May act as a ligand for C-C chemokine receptor CCR6. Positively regulates the sperm motility and bactericidal activity in a CCR6-dependent manner. Binds to CCR6 and triggers Ca2+ mobilization in the sperm which is important for its motility (By similarity).</text>
</comment>
<comment type="subunit">
    <text evidence="2">Monomer. Homodimer.</text>
</comment>
<comment type="subcellular location">
    <subcellularLocation>
        <location evidence="2">Secreted</location>
    </subcellularLocation>
    <subcellularLocation>
        <location evidence="2">Membrane</location>
    </subcellularLocation>
    <text evidence="2">Associates with tumor cell membrane-derived microvesicles.</text>
</comment>
<comment type="tissue specificity">
    <text>Neutrophilic granules.</text>
</comment>
<comment type="similarity">
    <text evidence="4">Belongs to the beta-defensin family.</text>
</comment>
<feature type="peptide" id="PRO_0000044721" description="Beta-defensin 1">
    <location>
        <begin position="1"/>
        <end position="38"/>
    </location>
</feature>
<feature type="disulfide bond" evidence="1">
    <location>
        <begin position="5"/>
        <end position="34"/>
    </location>
</feature>
<feature type="disulfide bond" evidence="1">
    <location>
        <begin position="12"/>
        <end position="27"/>
    </location>
</feature>
<feature type="disulfide bond" evidence="1">
    <location>
        <begin position="17"/>
        <end position="35"/>
    </location>
</feature>
<protein>
    <recommendedName>
        <fullName>Beta-defensin 1</fullName>
    </recommendedName>
    <alternativeName>
        <fullName>BNBD-1</fullName>
    </alternativeName>
    <alternativeName>
        <fullName>BNDB-1</fullName>
    </alternativeName>
</protein>
<reference key="1">
    <citation type="journal article" date="1993" name="J. Biol. Chem.">
        <title>Purification, primary structures, and antibacterial activities of beta-defensins, a new family of antimicrobial peptides from bovine neutrophils.</title>
        <authorList>
            <person name="Selsted M.E."/>
            <person name="Tang Y.-Q."/>
            <person name="Morris W.L."/>
            <person name="McGuire P.A."/>
            <person name="Novotny M.J."/>
            <person name="Smith W."/>
            <person name="Henschen A.H."/>
            <person name="Cullor J.S."/>
        </authorList>
    </citation>
    <scope>PROTEIN SEQUENCE</scope>
    <scope>FUNCTION</scope>
    <source>
        <strain>Hereford</strain>
        <tissue>Neutrophil</tissue>
    </source>
</reference>
<gene>
    <name type="primary">DEFB1</name>
</gene>
<keyword id="KW-0044">Antibiotic</keyword>
<keyword id="KW-0929">Antimicrobial</keyword>
<keyword id="KW-0211">Defensin</keyword>
<keyword id="KW-0903">Direct protein sequencing</keyword>
<keyword id="KW-1015">Disulfide bond</keyword>
<keyword id="KW-0472">Membrane</keyword>
<keyword id="KW-1185">Reference proteome</keyword>
<keyword id="KW-0964">Secreted</keyword>
<accession>P46159</accession>
<proteinExistence type="evidence at protein level"/>
<organism>
    <name type="scientific">Bos taurus</name>
    <name type="common">Bovine</name>
    <dbReference type="NCBI Taxonomy" id="9913"/>
    <lineage>
        <taxon>Eukaryota</taxon>
        <taxon>Metazoa</taxon>
        <taxon>Chordata</taxon>
        <taxon>Craniata</taxon>
        <taxon>Vertebrata</taxon>
        <taxon>Euteleostomi</taxon>
        <taxon>Mammalia</taxon>
        <taxon>Eutheria</taxon>
        <taxon>Laurasiatheria</taxon>
        <taxon>Artiodactyla</taxon>
        <taxon>Ruminantia</taxon>
        <taxon>Pecora</taxon>
        <taxon>Bovidae</taxon>
        <taxon>Bovinae</taxon>
        <taxon>Bos</taxon>
    </lineage>
</organism>